<sequence length="257" mass="28724">MDIHRLPALADNYIFLLHDRQRNQAAVVDPAEAKPVLDCLETLGADLVTIYNTHHHGDHVGANRELLAKYPNLEVYGGVEDQGRIPGQTVFLRDGDRLSFADREATVYFVPGHTRGHIAYYFAPGSGETIGDLFCGDTIFAGGCGRLFEGTPAQMVQSIGKLRQLPDQTRLWCAHEYTLGNLKFALTVDPSNKDLQERFQTVQGDRQRGQATIPSWLGTEKRTNPFLRWDNPAIQARVGMTEPARVFGKLRGMKDNF</sequence>
<keyword id="KW-0378">Hydrolase</keyword>
<keyword id="KW-0479">Metal-binding</keyword>
<keyword id="KW-1185">Reference proteome</keyword>
<keyword id="KW-0862">Zinc</keyword>
<evidence type="ECO:0000255" key="1">
    <source>
        <dbReference type="HAMAP-Rule" id="MF_01374"/>
    </source>
</evidence>
<gene>
    <name evidence="1" type="primary">gloB</name>
    <name type="ordered locus">sll1019</name>
</gene>
<accession>P72933</accession>
<organism>
    <name type="scientific">Synechocystis sp. (strain ATCC 27184 / PCC 6803 / Kazusa)</name>
    <dbReference type="NCBI Taxonomy" id="1111708"/>
    <lineage>
        <taxon>Bacteria</taxon>
        <taxon>Bacillati</taxon>
        <taxon>Cyanobacteriota</taxon>
        <taxon>Cyanophyceae</taxon>
        <taxon>Synechococcales</taxon>
        <taxon>Merismopediaceae</taxon>
        <taxon>Synechocystis</taxon>
    </lineage>
</organism>
<name>GLO2_SYNY3</name>
<reference key="1">
    <citation type="journal article" date="1996" name="DNA Res.">
        <title>Sequence analysis of the genome of the unicellular cyanobacterium Synechocystis sp. strain PCC6803. II. Sequence determination of the entire genome and assignment of potential protein-coding regions.</title>
        <authorList>
            <person name="Kaneko T."/>
            <person name="Sato S."/>
            <person name="Kotani H."/>
            <person name="Tanaka A."/>
            <person name="Asamizu E."/>
            <person name="Nakamura Y."/>
            <person name="Miyajima N."/>
            <person name="Hirosawa M."/>
            <person name="Sugiura M."/>
            <person name="Sasamoto S."/>
            <person name="Kimura T."/>
            <person name="Hosouchi T."/>
            <person name="Matsuno A."/>
            <person name="Muraki A."/>
            <person name="Nakazaki N."/>
            <person name="Naruo K."/>
            <person name="Okumura S."/>
            <person name="Shimpo S."/>
            <person name="Takeuchi C."/>
            <person name="Wada T."/>
            <person name="Watanabe A."/>
            <person name="Yamada M."/>
            <person name="Yasuda M."/>
            <person name="Tabata S."/>
        </authorList>
    </citation>
    <scope>NUCLEOTIDE SEQUENCE [LARGE SCALE GENOMIC DNA]</scope>
    <source>
        <strain>ATCC 27184 / PCC 6803 / Kazusa</strain>
    </source>
</reference>
<comment type="function">
    <text evidence="1">Thiolesterase that catalyzes the hydrolysis of S-D-lactoyl-glutathione to form glutathione and D-lactic acid.</text>
</comment>
<comment type="catalytic activity">
    <reaction evidence="1">
        <text>an S-(2-hydroxyacyl)glutathione + H2O = a 2-hydroxy carboxylate + glutathione + H(+)</text>
        <dbReference type="Rhea" id="RHEA:21864"/>
        <dbReference type="ChEBI" id="CHEBI:15377"/>
        <dbReference type="ChEBI" id="CHEBI:15378"/>
        <dbReference type="ChEBI" id="CHEBI:57925"/>
        <dbReference type="ChEBI" id="CHEBI:58896"/>
        <dbReference type="ChEBI" id="CHEBI:71261"/>
        <dbReference type="EC" id="3.1.2.6"/>
    </reaction>
</comment>
<comment type="cofactor">
    <cofactor evidence="1">
        <name>Zn(2+)</name>
        <dbReference type="ChEBI" id="CHEBI:29105"/>
    </cofactor>
    <text evidence="1">Binds 2 Zn(2+) ions per subunit.</text>
</comment>
<comment type="pathway">
    <text evidence="1">Secondary metabolite metabolism; methylglyoxal degradation; (R)-lactate from methylglyoxal: step 2/2.</text>
</comment>
<comment type="subunit">
    <text evidence="1">Monomer.</text>
</comment>
<comment type="similarity">
    <text evidence="1">Belongs to the metallo-beta-lactamase superfamily. Glyoxalase II family.</text>
</comment>
<feature type="chain" id="PRO_0000192356" description="Hydroxyacylglutathione hydrolase">
    <location>
        <begin position="1"/>
        <end position="257"/>
    </location>
</feature>
<feature type="binding site" evidence="1">
    <location>
        <position position="54"/>
    </location>
    <ligand>
        <name>Zn(2+)</name>
        <dbReference type="ChEBI" id="CHEBI:29105"/>
        <label>1</label>
    </ligand>
</feature>
<feature type="binding site" evidence="1">
    <location>
        <position position="56"/>
    </location>
    <ligand>
        <name>Zn(2+)</name>
        <dbReference type="ChEBI" id="CHEBI:29105"/>
        <label>1</label>
    </ligand>
</feature>
<feature type="binding site" evidence="1">
    <location>
        <position position="58"/>
    </location>
    <ligand>
        <name>Zn(2+)</name>
        <dbReference type="ChEBI" id="CHEBI:29105"/>
        <label>2</label>
    </ligand>
</feature>
<feature type="binding site" evidence="1">
    <location>
        <position position="59"/>
    </location>
    <ligand>
        <name>Zn(2+)</name>
        <dbReference type="ChEBI" id="CHEBI:29105"/>
        <label>2</label>
    </ligand>
</feature>
<feature type="binding site" evidence="1">
    <location>
        <position position="113"/>
    </location>
    <ligand>
        <name>Zn(2+)</name>
        <dbReference type="ChEBI" id="CHEBI:29105"/>
        <label>1</label>
    </ligand>
</feature>
<feature type="binding site" evidence="1">
    <location>
        <position position="137"/>
    </location>
    <ligand>
        <name>Zn(2+)</name>
        <dbReference type="ChEBI" id="CHEBI:29105"/>
        <label>1</label>
    </ligand>
</feature>
<feature type="binding site" evidence="1">
    <location>
        <position position="137"/>
    </location>
    <ligand>
        <name>Zn(2+)</name>
        <dbReference type="ChEBI" id="CHEBI:29105"/>
        <label>2</label>
    </ligand>
</feature>
<feature type="binding site" evidence="1">
    <location>
        <position position="175"/>
    </location>
    <ligand>
        <name>Zn(2+)</name>
        <dbReference type="ChEBI" id="CHEBI:29105"/>
        <label>2</label>
    </ligand>
</feature>
<dbReference type="EC" id="3.1.2.6" evidence="1"/>
<dbReference type="EMBL" id="BA000022">
    <property type="protein sequence ID" value="BAA16950.1"/>
    <property type="molecule type" value="Genomic_DNA"/>
</dbReference>
<dbReference type="PIR" id="S74799">
    <property type="entry name" value="S74799"/>
</dbReference>
<dbReference type="SMR" id="P72933"/>
<dbReference type="STRING" id="1148.gene:10497810"/>
<dbReference type="PaxDb" id="1148-1652024"/>
<dbReference type="EnsemblBacteria" id="BAA16950">
    <property type="protein sequence ID" value="BAA16950"/>
    <property type="gene ID" value="BAA16950"/>
</dbReference>
<dbReference type="KEGG" id="syn:sll1019"/>
<dbReference type="eggNOG" id="COG0491">
    <property type="taxonomic scope" value="Bacteria"/>
</dbReference>
<dbReference type="InParanoid" id="P72933"/>
<dbReference type="PhylomeDB" id="P72933"/>
<dbReference type="UniPathway" id="UPA00619">
    <property type="reaction ID" value="UER00676"/>
</dbReference>
<dbReference type="Proteomes" id="UP000001425">
    <property type="component" value="Chromosome"/>
</dbReference>
<dbReference type="GO" id="GO:0004416">
    <property type="term" value="F:hydroxyacylglutathione hydrolase activity"/>
    <property type="evidence" value="ECO:0007669"/>
    <property type="project" value="UniProtKB-UniRule"/>
</dbReference>
<dbReference type="GO" id="GO:0046872">
    <property type="term" value="F:metal ion binding"/>
    <property type="evidence" value="ECO:0007669"/>
    <property type="project" value="UniProtKB-KW"/>
</dbReference>
<dbReference type="GO" id="GO:0019243">
    <property type="term" value="P:methylglyoxal catabolic process to D-lactate via S-lactoyl-glutathione"/>
    <property type="evidence" value="ECO:0007669"/>
    <property type="project" value="InterPro"/>
</dbReference>
<dbReference type="CDD" id="cd07723">
    <property type="entry name" value="hydroxyacylglutathione_hydrolase_MBL-fold"/>
    <property type="match status" value="1"/>
</dbReference>
<dbReference type="Gene3D" id="3.60.15.10">
    <property type="entry name" value="Ribonuclease Z/Hydroxyacylglutathione hydrolase-like"/>
    <property type="match status" value="1"/>
</dbReference>
<dbReference type="HAMAP" id="MF_01374">
    <property type="entry name" value="Glyoxalase_2"/>
    <property type="match status" value="1"/>
</dbReference>
<dbReference type="InterPro" id="IPR035680">
    <property type="entry name" value="Clx_II_MBL"/>
</dbReference>
<dbReference type="InterPro" id="IPR050110">
    <property type="entry name" value="Glyoxalase_II_hydrolase"/>
</dbReference>
<dbReference type="InterPro" id="IPR032282">
    <property type="entry name" value="HAGH_C"/>
</dbReference>
<dbReference type="InterPro" id="IPR017782">
    <property type="entry name" value="Hydroxyacylglutathione_Hdrlase"/>
</dbReference>
<dbReference type="InterPro" id="IPR001279">
    <property type="entry name" value="Metallo-B-lactamas"/>
</dbReference>
<dbReference type="InterPro" id="IPR036866">
    <property type="entry name" value="RibonucZ/Hydroxyglut_hydro"/>
</dbReference>
<dbReference type="NCBIfam" id="TIGR03413">
    <property type="entry name" value="GSH_gloB"/>
    <property type="match status" value="1"/>
</dbReference>
<dbReference type="PANTHER" id="PTHR43705">
    <property type="entry name" value="HYDROXYACYLGLUTATHIONE HYDROLASE"/>
    <property type="match status" value="1"/>
</dbReference>
<dbReference type="PANTHER" id="PTHR43705:SF1">
    <property type="entry name" value="HYDROXYACYLGLUTATHIONE HYDROLASE GLOB"/>
    <property type="match status" value="1"/>
</dbReference>
<dbReference type="Pfam" id="PF16123">
    <property type="entry name" value="HAGH_C"/>
    <property type="match status" value="1"/>
</dbReference>
<dbReference type="Pfam" id="PF00753">
    <property type="entry name" value="Lactamase_B"/>
    <property type="match status" value="1"/>
</dbReference>
<dbReference type="PIRSF" id="PIRSF005457">
    <property type="entry name" value="Glx"/>
    <property type="match status" value="1"/>
</dbReference>
<dbReference type="SMART" id="SM00849">
    <property type="entry name" value="Lactamase_B"/>
    <property type="match status" value="1"/>
</dbReference>
<dbReference type="SUPFAM" id="SSF56281">
    <property type="entry name" value="Metallo-hydrolase/oxidoreductase"/>
    <property type="match status" value="1"/>
</dbReference>
<proteinExistence type="inferred from homology"/>
<protein>
    <recommendedName>
        <fullName evidence="1">Hydroxyacylglutathione hydrolase</fullName>
        <ecNumber evidence="1">3.1.2.6</ecNumber>
    </recommendedName>
    <alternativeName>
        <fullName evidence="1">Glyoxalase II</fullName>
        <shortName evidence="1">Glx II</shortName>
    </alternativeName>
</protein>